<comment type="function">
    <text evidence="1 5 8">The small GTPases Rab are key regulators of intracellular membrane trafficking, from the formation of transport vesicles to their fusion with membranes. Rabs cycle between an inactive GDP-bound form and an active GTP-bound form that is able to recruit to membranes different set of downstream effectors directly responsible for vesicle formation, movement, tethering and fusion. Required for the integrity and for normal function of the Golgi apparatus and the trans-Golgi network. Plays a role in insulin-stimulated translocation of GLUT4 to the cell membrane. Plays a role in the maturation of phagosomes that engulf pathogens, such as S.aureus and Mycobacterium (By similarity). Plays a role in M6PR transport from the trans-Golgi network to endosomes. Plays a role in the internalization of EGFR from the cell membrane into endosomes.</text>
</comment>
<comment type="catalytic activity">
    <reaction evidence="3">
        <text>GTP + H2O = GDP + phosphate + H(+)</text>
        <dbReference type="Rhea" id="RHEA:19669"/>
        <dbReference type="ChEBI" id="CHEBI:15377"/>
        <dbReference type="ChEBI" id="CHEBI:15378"/>
        <dbReference type="ChEBI" id="CHEBI:37565"/>
        <dbReference type="ChEBI" id="CHEBI:43474"/>
        <dbReference type="ChEBI" id="CHEBI:58189"/>
        <dbReference type="EC" id="3.6.5.2"/>
    </reaction>
    <physiologicalReaction direction="left-to-right" evidence="3">
        <dbReference type="Rhea" id="RHEA:19670"/>
    </physiologicalReaction>
</comment>
<comment type="cofactor">
    <cofactor evidence="3">
        <name>Mg(2+)</name>
        <dbReference type="ChEBI" id="CHEBI:18420"/>
    </cofactor>
</comment>
<comment type="activity regulation">
    <text evidence="3">Regulated by guanine nucleotide exchange factors (GEFs) including RIN3 and GAPVD1 which promote the exchange of bound GDP for free GTP. Regulated by GTPase activating proteins (GAPs) which increase the GTP hydrolysis activity. Inhibited by GDP dissociation inhibitors (GDIs) which prevent Rab-GDP dissociation.</text>
</comment>
<comment type="subunit">
    <text evidence="1 4 8">Interacts (in GDP-bound form) with RIN3 and GAPVD1, which function as guanine exchange factors (GEF). Interacts (in GTP-bound form) with EEA1. Interacts with NGFR. Interacts with EGFR (By similarity). Interacts with OCRL. Interacts (in GTP-bound form) with APPL2; interaction contributes to or enhances recruitment of APPL2 to the phagosomes; interaction enhances Fc-gamma receptor-mediated phagocytosis through PI3K/Akt signaling in macrophages (By similarity).</text>
</comment>
<comment type="subcellular location">
    <subcellularLocation>
        <location evidence="3">Early endosome</location>
    </subcellularLocation>
    <subcellularLocation>
        <location evidence="3">Golgi apparatus</location>
        <location evidence="3">trans-Golgi network</location>
    </subcellularLocation>
    <subcellularLocation>
        <location evidence="9">Golgi apparatus</location>
        <location evidence="9">trans-Golgi network membrane</location>
        <topology evidence="9">Lipid-anchor</topology>
        <orientation evidence="9">Cytoplasmic side</orientation>
    </subcellularLocation>
    <subcellularLocation>
        <location evidence="3">Cytoplasmic vesicle</location>
        <location evidence="3">Phagosome</location>
    </subcellularLocation>
    <subcellularLocation>
        <location evidence="9">Cytoplasmic vesicle</location>
        <location evidence="9">Phagosome membrane</location>
        <topology evidence="9">Lipid-anchor</topology>
        <orientation evidence="9">Cytoplasmic side</orientation>
    </subcellularLocation>
    <text evidence="3">Rapidly recruited to phagosomes containing S.aureus or M.tuberculosis.</text>
</comment>
<comment type="tissue specificity">
    <text evidence="6 7">Detected in brain astrocytes, spleen and intestine (at protein level).</text>
</comment>
<comment type="domain">
    <text evidence="2">Switch 1, switch 2 and the interswitch regions are characteristic of Rab GTPases and mediate the interactions with Rab downstream effectors. The switch regions undergo conformational changes upon nucleotide binding which drive interaction with specific sets of effector proteins, with most effectors only binding to GTP-bound Rab.</text>
</comment>
<comment type="similarity">
    <text evidence="9">Belongs to the small GTPase superfamily. Rab family.</text>
</comment>
<comment type="sequence caution" evidence="9">
    <conflict type="erroneous initiation">
        <sequence resource="EMBL-CDS" id="AAF67746"/>
    </conflict>
    <text>Truncated N-terminus.</text>
</comment>
<gene>
    <name evidence="10" type="primary">Rab31</name>
</gene>
<dbReference type="EC" id="3.6.5.2" evidence="3"/>
<dbReference type="EMBL" id="AF254800">
    <property type="protein sequence ID" value="AAF67746.1"/>
    <property type="status" value="ALT_INIT"/>
    <property type="molecule type" value="mRNA"/>
</dbReference>
<dbReference type="EMBL" id="BC072698">
    <property type="protein sequence ID" value="AAH72698.1"/>
    <property type="molecule type" value="mRNA"/>
</dbReference>
<dbReference type="RefSeq" id="NP_659562.2">
    <property type="nucleotide sequence ID" value="NM_145094.2"/>
</dbReference>
<dbReference type="SMR" id="Q6GQP4"/>
<dbReference type="FunCoup" id="Q6GQP4">
    <property type="interactions" value="466"/>
</dbReference>
<dbReference type="IntAct" id="Q6GQP4">
    <property type="interactions" value="1"/>
</dbReference>
<dbReference type="STRING" id="10116.ENSRNOP00000063486"/>
<dbReference type="GlyGen" id="Q6GQP4">
    <property type="glycosylation" value="1 site"/>
</dbReference>
<dbReference type="PhosphoSitePlus" id="Q6GQP4"/>
<dbReference type="jPOST" id="Q6GQP4"/>
<dbReference type="PaxDb" id="10116-ENSRNOP00000063486"/>
<dbReference type="Ensembl" id="ENSRNOT00000109162.1">
    <property type="protein sequence ID" value="ENSRNOP00000076689.1"/>
    <property type="gene ID" value="ENSRNOG00000042189.3"/>
</dbReference>
<dbReference type="Ensembl" id="ENSRNOT00055032557">
    <property type="protein sequence ID" value="ENSRNOP00055026364"/>
    <property type="gene ID" value="ENSRNOG00055019082"/>
</dbReference>
<dbReference type="Ensembl" id="ENSRNOT00060008755">
    <property type="protein sequence ID" value="ENSRNOP00060006600"/>
    <property type="gene ID" value="ENSRNOG00060005264"/>
</dbReference>
<dbReference type="Ensembl" id="ENSRNOT00065032534">
    <property type="protein sequence ID" value="ENSRNOP00065025964"/>
    <property type="gene ID" value="ENSRNOG00065019337"/>
</dbReference>
<dbReference type="GeneID" id="246324"/>
<dbReference type="KEGG" id="rno:246324"/>
<dbReference type="AGR" id="RGD:628598"/>
<dbReference type="CTD" id="11031"/>
<dbReference type="RGD" id="628598">
    <property type="gene designation" value="Rab31"/>
</dbReference>
<dbReference type="eggNOG" id="KOG0092">
    <property type="taxonomic scope" value="Eukaryota"/>
</dbReference>
<dbReference type="GeneTree" id="ENSGT00940000155702"/>
<dbReference type="InParanoid" id="Q6GQP4"/>
<dbReference type="OMA" id="KQDTFHT"/>
<dbReference type="OrthoDB" id="63533at2759"/>
<dbReference type="PhylomeDB" id="Q6GQP4"/>
<dbReference type="TreeFam" id="TF331262"/>
<dbReference type="Reactome" id="R-RNO-6798695">
    <property type="pathway name" value="Neutrophil degranulation"/>
</dbReference>
<dbReference type="Reactome" id="R-RNO-8873719">
    <property type="pathway name" value="RAB geranylgeranylation"/>
</dbReference>
<dbReference type="Reactome" id="R-RNO-8876198">
    <property type="pathway name" value="RAB GEFs exchange GTP for GDP on RABs"/>
</dbReference>
<dbReference type="PRO" id="PR:Q6GQP4"/>
<dbReference type="Proteomes" id="UP000002494">
    <property type="component" value="Chromosome 9"/>
</dbReference>
<dbReference type="GO" id="GO:0005737">
    <property type="term" value="C:cytoplasm"/>
    <property type="evidence" value="ECO:0000266"/>
    <property type="project" value="RGD"/>
</dbReference>
<dbReference type="GO" id="GO:0005769">
    <property type="term" value="C:early endosome"/>
    <property type="evidence" value="ECO:0000314"/>
    <property type="project" value="RGD"/>
</dbReference>
<dbReference type="GO" id="GO:0036186">
    <property type="term" value="C:early phagosome membrane"/>
    <property type="evidence" value="ECO:0000250"/>
    <property type="project" value="UniProtKB"/>
</dbReference>
<dbReference type="GO" id="GO:0012505">
    <property type="term" value="C:endomembrane system"/>
    <property type="evidence" value="ECO:0000318"/>
    <property type="project" value="GO_Central"/>
</dbReference>
<dbReference type="GO" id="GO:0005770">
    <property type="term" value="C:late endosome"/>
    <property type="evidence" value="ECO:0000314"/>
    <property type="project" value="RGD"/>
</dbReference>
<dbReference type="GO" id="GO:0001891">
    <property type="term" value="C:phagocytic cup"/>
    <property type="evidence" value="ECO:0000250"/>
    <property type="project" value="UniProtKB"/>
</dbReference>
<dbReference type="GO" id="GO:0045335">
    <property type="term" value="C:phagocytic vesicle"/>
    <property type="evidence" value="ECO:0000250"/>
    <property type="project" value="UniProtKB"/>
</dbReference>
<dbReference type="GO" id="GO:0005802">
    <property type="term" value="C:trans-Golgi network"/>
    <property type="evidence" value="ECO:0000314"/>
    <property type="project" value="RGD"/>
</dbReference>
<dbReference type="GO" id="GO:0032588">
    <property type="term" value="C:trans-Golgi network membrane"/>
    <property type="evidence" value="ECO:0000250"/>
    <property type="project" value="UniProtKB"/>
</dbReference>
<dbReference type="GO" id="GO:0019003">
    <property type="term" value="F:GDP binding"/>
    <property type="evidence" value="ECO:0000250"/>
    <property type="project" value="UniProtKB"/>
</dbReference>
<dbReference type="GO" id="GO:0005525">
    <property type="term" value="F:GTP binding"/>
    <property type="evidence" value="ECO:0000250"/>
    <property type="project" value="UniProtKB"/>
</dbReference>
<dbReference type="GO" id="GO:0003924">
    <property type="term" value="F:GTPase activity"/>
    <property type="evidence" value="ECO:0000250"/>
    <property type="project" value="UniProtKB"/>
</dbReference>
<dbReference type="GO" id="GO:0032869">
    <property type="term" value="P:cellular response to insulin stimulus"/>
    <property type="evidence" value="ECO:0000250"/>
    <property type="project" value="UniProtKB"/>
</dbReference>
<dbReference type="GO" id="GO:0006897">
    <property type="term" value="P:endocytosis"/>
    <property type="evidence" value="ECO:0000318"/>
    <property type="project" value="GO_Central"/>
</dbReference>
<dbReference type="GO" id="GO:0043001">
    <property type="term" value="P:Golgi to plasma membrane protein transport"/>
    <property type="evidence" value="ECO:0000250"/>
    <property type="project" value="UniProtKB"/>
</dbReference>
<dbReference type="GO" id="GO:0048193">
    <property type="term" value="P:Golgi vesicle transport"/>
    <property type="evidence" value="ECO:0000315"/>
    <property type="project" value="RGD"/>
</dbReference>
<dbReference type="GO" id="GO:0006886">
    <property type="term" value="P:intracellular protein transport"/>
    <property type="evidence" value="ECO:0000318"/>
    <property type="project" value="GO_Central"/>
</dbReference>
<dbReference type="GO" id="GO:0090382">
    <property type="term" value="P:phagosome maturation"/>
    <property type="evidence" value="ECO:0000250"/>
    <property type="project" value="UniProtKB"/>
</dbReference>
<dbReference type="GO" id="GO:0060100">
    <property type="term" value="P:positive regulation of phagocytosis, engulfment"/>
    <property type="evidence" value="ECO:0000250"/>
    <property type="project" value="UniProtKB"/>
</dbReference>
<dbReference type="GO" id="GO:0031623">
    <property type="term" value="P:receptor internalization"/>
    <property type="evidence" value="ECO:0000250"/>
    <property type="project" value="UniProtKB"/>
</dbReference>
<dbReference type="GO" id="GO:0045055">
    <property type="term" value="P:regulated exocytosis"/>
    <property type="evidence" value="ECO:0000250"/>
    <property type="project" value="UniProtKB"/>
</dbReference>
<dbReference type="CDD" id="cd01860">
    <property type="entry name" value="Rab5_related"/>
    <property type="match status" value="1"/>
</dbReference>
<dbReference type="FunFam" id="3.40.50.300:FF:000346">
    <property type="entry name" value="RAB31, member RAS oncogene family"/>
    <property type="match status" value="1"/>
</dbReference>
<dbReference type="Gene3D" id="3.40.50.300">
    <property type="entry name" value="P-loop containing nucleotide triphosphate hydrolases"/>
    <property type="match status" value="1"/>
</dbReference>
<dbReference type="InterPro" id="IPR027417">
    <property type="entry name" value="P-loop_NTPase"/>
</dbReference>
<dbReference type="InterPro" id="IPR005225">
    <property type="entry name" value="Small_GTP-bd"/>
</dbReference>
<dbReference type="InterPro" id="IPR001806">
    <property type="entry name" value="Small_GTPase"/>
</dbReference>
<dbReference type="NCBIfam" id="TIGR00231">
    <property type="entry name" value="small_GTP"/>
    <property type="match status" value="1"/>
</dbReference>
<dbReference type="PANTHER" id="PTHR47978">
    <property type="match status" value="1"/>
</dbReference>
<dbReference type="Pfam" id="PF00071">
    <property type="entry name" value="Ras"/>
    <property type="match status" value="1"/>
</dbReference>
<dbReference type="PRINTS" id="PR00449">
    <property type="entry name" value="RASTRNSFRMNG"/>
</dbReference>
<dbReference type="SMART" id="SM00175">
    <property type="entry name" value="RAB"/>
    <property type="match status" value="1"/>
</dbReference>
<dbReference type="SMART" id="SM00176">
    <property type="entry name" value="RAN"/>
    <property type="match status" value="1"/>
</dbReference>
<dbReference type="SMART" id="SM00173">
    <property type="entry name" value="RAS"/>
    <property type="match status" value="1"/>
</dbReference>
<dbReference type="SMART" id="SM00174">
    <property type="entry name" value="RHO"/>
    <property type="match status" value="1"/>
</dbReference>
<dbReference type="SUPFAM" id="SSF52540">
    <property type="entry name" value="P-loop containing nucleoside triphosphate hydrolases"/>
    <property type="match status" value="1"/>
</dbReference>
<dbReference type="PROSITE" id="PS51419">
    <property type="entry name" value="RAB"/>
    <property type="match status" value="1"/>
</dbReference>
<sequence length="195" mass="21500">MMAIRELKVCLLGDTGVGKSSIVCRFVQDHFDHNISPTIGASFMTKTVPCGNELHKFLIWDTAGQERFHSLAPMYYRGSAAAVIVYDITKQDSFHTLKKWVKELKEHGPENIVMAIAGNKCDLSDIREVPLKDAKEYAESIGALVVETSAKNAINIEELFQGISRQIPPLDPHENGNSGGIKLGNQSLQAGRRCC</sequence>
<feature type="chain" id="PRO_0000121234" description="Ras-related protein Rab-31">
    <location>
        <begin position="1"/>
        <end position="195"/>
    </location>
</feature>
<feature type="short sequence motif" description="Switch 1" evidence="2">
    <location>
        <begin position="30"/>
        <end position="42"/>
    </location>
</feature>
<feature type="short sequence motif" description="Switch 2" evidence="2">
    <location>
        <begin position="63"/>
        <end position="79"/>
    </location>
</feature>
<feature type="binding site" evidence="3">
    <location>
        <position position="16"/>
    </location>
    <ligand>
        <name>GTP</name>
        <dbReference type="ChEBI" id="CHEBI:37565"/>
    </ligand>
</feature>
<feature type="binding site" evidence="3">
    <location>
        <position position="18"/>
    </location>
    <ligand>
        <name>GTP</name>
        <dbReference type="ChEBI" id="CHEBI:37565"/>
    </ligand>
</feature>
<feature type="binding site" evidence="3">
    <location>
        <position position="19"/>
    </location>
    <ligand>
        <name>GTP</name>
        <dbReference type="ChEBI" id="CHEBI:37565"/>
    </ligand>
</feature>
<feature type="binding site" evidence="3">
    <location>
        <position position="20"/>
    </location>
    <ligand>
        <name>GTP</name>
        <dbReference type="ChEBI" id="CHEBI:37565"/>
    </ligand>
</feature>
<feature type="binding site" evidence="3">
    <location>
        <position position="20"/>
    </location>
    <ligand>
        <name>Mg(2+)</name>
        <dbReference type="ChEBI" id="CHEBI:18420"/>
    </ligand>
</feature>
<feature type="binding site" evidence="3">
    <location>
        <position position="21"/>
    </location>
    <ligand>
        <name>GTP</name>
        <dbReference type="ChEBI" id="CHEBI:37565"/>
    </ligand>
</feature>
<feature type="binding site" evidence="3">
    <location>
        <position position="32"/>
    </location>
    <ligand>
        <name>GTP</name>
        <dbReference type="ChEBI" id="CHEBI:37565"/>
    </ligand>
</feature>
<feature type="binding site" evidence="3">
    <location>
        <position position="33"/>
    </location>
    <ligand>
        <name>GTP</name>
        <dbReference type="ChEBI" id="CHEBI:37565"/>
    </ligand>
</feature>
<feature type="binding site" evidence="3">
    <location>
        <position position="38"/>
    </location>
    <ligand>
        <name>GTP</name>
        <dbReference type="ChEBI" id="CHEBI:37565"/>
    </ligand>
</feature>
<feature type="binding site" evidence="3">
    <location>
        <position position="38"/>
    </location>
    <ligand>
        <name>Mg(2+)</name>
        <dbReference type="ChEBI" id="CHEBI:18420"/>
    </ligand>
</feature>
<feature type="binding site" evidence="3">
    <location>
        <position position="64"/>
    </location>
    <ligand>
        <name>GTP</name>
        <dbReference type="ChEBI" id="CHEBI:37565"/>
    </ligand>
</feature>
<feature type="binding site" evidence="3">
    <location>
        <position position="119"/>
    </location>
    <ligand>
        <name>GTP</name>
        <dbReference type="ChEBI" id="CHEBI:37565"/>
    </ligand>
</feature>
<feature type="binding site" evidence="3">
    <location>
        <position position="122"/>
    </location>
    <ligand>
        <name>GTP</name>
        <dbReference type="ChEBI" id="CHEBI:37565"/>
    </ligand>
</feature>
<feature type="binding site" evidence="3">
    <location>
        <position position="150"/>
    </location>
    <ligand>
        <name>GTP</name>
        <dbReference type="ChEBI" id="CHEBI:37565"/>
    </ligand>
</feature>
<feature type="binding site" evidence="3">
    <location>
        <position position="151"/>
    </location>
    <ligand>
        <name>GTP</name>
        <dbReference type="ChEBI" id="CHEBI:37565"/>
    </ligand>
</feature>
<feature type="modified residue" description="Phosphoserine" evidence="3">
    <location>
        <position position="36"/>
    </location>
</feature>
<feature type="lipid moiety-binding region" description="S-geranylgeranyl cysteine" evidence="1">
    <location>
        <position position="194"/>
    </location>
</feature>
<feature type="lipid moiety-binding region" description="S-geranylgeranyl cysteine" evidence="1">
    <location>
        <position position="195"/>
    </location>
</feature>
<feature type="sequence conflict" description="In Ref. 1; AAF67746." evidence="9" ref="1">
    <original>H</original>
    <variation>Y</variation>
    <location>
        <position position="107"/>
    </location>
</feature>
<reference key="1">
    <citation type="submission" date="2000-04" db="EMBL/GenBank/DDBJ databases">
        <title>Visualization in living cells of formation and transport of vesicles: participation of Rab0, an oligodendrocyte protein.</title>
        <authorList>
            <person name="Rodriguez-Gabin A.G."/>
            <person name="Cammer M."/>
            <person name="Almazan G."/>
            <person name="Charron M.J."/>
            <person name="Larocca J.N."/>
        </authorList>
    </citation>
    <scope>NUCLEOTIDE SEQUENCE [MRNA]</scope>
</reference>
<reference key="2">
    <citation type="journal article" date="2004" name="Genome Res.">
        <title>The status, quality, and expansion of the NIH full-length cDNA project: the Mammalian Gene Collection (MGC).</title>
        <authorList>
            <consortium name="The MGC Project Team"/>
        </authorList>
    </citation>
    <scope>NUCLEOTIDE SEQUENCE [LARGE SCALE MRNA]</scope>
    <source>
        <tissue>Heart</tissue>
    </source>
</reference>
<reference key="3">
    <citation type="journal article" date="2001" name="J. Neurosci. Res.">
        <title>Role of rRAB22b, an oligodendrocyte protein, in regulation of transport of vesicles from trans Golgi to endocytic compartments.</title>
        <authorList>
            <person name="Rodriguez-Gabin A.G."/>
            <person name="Cammer M."/>
            <person name="Almazan G."/>
            <person name="Charron M."/>
            <person name="Larocca J.N."/>
        </authorList>
    </citation>
    <scope>FUNCTION</scope>
</reference>
<reference key="4">
    <citation type="journal article" date="2007" name="Biochem. Biophys. Res. Commun.">
        <title>Rab22B's role in trans-Golgi network membrane dynamics.</title>
        <authorList>
            <person name="Ng E.L."/>
            <person name="Wang Y."/>
            <person name="Tang B.L."/>
        </authorList>
    </citation>
    <scope>TISSUE SPECIFICITY</scope>
</reference>
<reference key="5">
    <citation type="journal article" date="2009" name="J. Cell. Physiol.">
        <title>Rab22B is expressed in the CNS astroglia lineage and plays a role in epidermal growth factor receptor trafficking in A431 cells.</title>
        <authorList>
            <person name="Ng E.L."/>
            <person name="Ng J.J."/>
            <person name="Liang F."/>
            <person name="Tang B.L."/>
        </authorList>
    </citation>
    <scope>TISSUE SPECIFICITY</scope>
</reference>
<reference key="6">
    <citation type="journal article" date="2010" name="J. Neurosci. Res.">
        <title>Interaction of Rab31 and OCRL-1 in oligodendrocytes: its role in transport of mannose 6-phosphate receptors.</title>
        <authorList>
            <person name="Rodriguez-Gabin A.G."/>
            <person name="Ortiz E."/>
            <person name="Demoliner K."/>
            <person name="Si Q."/>
            <person name="Almazan G."/>
            <person name="Larocca J.N."/>
        </authorList>
    </citation>
    <scope>FUNCTION</scope>
    <scope>INTERACTION WITH OCRL</scope>
</reference>
<evidence type="ECO:0000250" key="1"/>
<evidence type="ECO:0000250" key="2">
    <source>
        <dbReference type="UniProtKB" id="P20339"/>
    </source>
</evidence>
<evidence type="ECO:0000250" key="3">
    <source>
        <dbReference type="UniProtKB" id="Q13636"/>
    </source>
</evidence>
<evidence type="ECO:0000250" key="4">
    <source>
        <dbReference type="UniProtKB" id="Q921E2"/>
    </source>
</evidence>
<evidence type="ECO:0000269" key="5">
    <source>
    </source>
</evidence>
<evidence type="ECO:0000269" key="6">
    <source>
    </source>
</evidence>
<evidence type="ECO:0000269" key="7">
    <source>
    </source>
</evidence>
<evidence type="ECO:0000269" key="8">
    <source>
    </source>
</evidence>
<evidence type="ECO:0000305" key="9"/>
<evidence type="ECO:0000312" key="10">
    <source>
        <dbReference type="RGD" id="628598"/>
    </source>
</evidence>
<protein>
    <recommendedName>
        <fullName>Ras-related protein Rab-31</fullName>
        <ecNumber evidence="3">3.6.5.2</ecNumber>
    </recommendedName>
    <alternativeName>
        <fullName>GTP-binding protein Rab0</fullName>
    </alternativeName>
</protein>
<organism>
    <name type="scientific">Rattus norvegicus</name>
    <name type="common">Rat</name>
    <dbReference type="NCBI Taxonomy" id="10116"/>
    <lineage>
        <taxon>Eukaryota</taxon>
        <taxon>Metazoa</taxon>
        <taxon>Chordata</taxon>
        <taxon>Craniata</taxon>
        <taxon>Vertebrata</taxon>
        <taxon>Euteleostomi</taxon>
        <taxon>Mammalia</taxon>
        <taxon>Eutheria</taxon>
        <taxon>Euarchontoglires</taxon>
        <taxon>Glires</taxon>
        <taxon>Rodentia</taxon>
        <taxon>Myomorpha</taxon>
        <taxon>Muroidea</taxon>
        <taxon>Muridae</taxon>
        <taxon>Murinae</taxon>
        <taxon>Rattus</taxon>
    </lineage>
</organism>
<keyword id="KW-0968">Cytoplasmic vesicle</keyword>
<keyword id="KW-0967">Endosome</keyword>
<keyword id="KW-0333">Golgi apparatus</keyword>
<keyword id="KW-0342">GTP-binding</keyword>
<keyword id="KW-0378">Hydrolase</keyword>
<keyword id="KW-0449">Lipoprotein</keyword>
<keyword id="KW-0460">Magnesium</keyword>
<keyword id="KW-0472">Membrane</keyword>
<keyword id="KW-0479">Metal-binding</keyword>
<keyword id="KW-0547">Nucleotide-binding</keyword>
<keyword id="KW-0597">Phosphoprotein</keyword>
<keyword id="KW-0636">Prenylation</keyword>
<keyword id="KW-1185">Reference proteome</keyword>
<accession>Q6GQP4</accession>
<accession>Q9JK74</accession>
<name>RAB31_RAT</name>
<proteinExistence type="evidence at protein level"/>